<proteinExistence type="evidence at protein level"/>
<sequence length="130" mass="14438">MLDWRLASTHFILAMIVMLWGSGKAFSVDLASQEFGTASLQSPPTAREEKSATELSAKLLRLDDLVSLENDVFETKKKRSFSGFGSPLDRLSAGSVEHRGKQRKAVDHSKKRFGIPMDRIGRNRLSSSRG</sequence>
<dbReference type="EMBL" id="AY395730">
    <property type="protein sequence ID" value="AAQ84523.1"/>
    <property type="molecule type" value="mRNA"/>
</dbReference>
<dbReference type="EMBL" id="AY573932">
    <property type="protein sequence ID" value="AAS87598.1"/>
    <property type="molecule type" value="mRNA"/>
</dbReference>
<dbReference type="EMBL" id="BC117063">
    <property type="protein sequence ID" value="AAI17064.1"/>
    <property type="molecule type" value="mRNA"/>
</dbReference>
<dbReference type="EMBL" id="BC117089">
    <property type="protein sequence ID" value="AAI17090.1"/>
    <property type="molecule type" value="mRNA"/>
</dbReference>
<dbReference type="CCDS" id="CCDS28090.1"/>
<dbReference type="RefSeq" id="NP_932780.1">
    <property type="nucleotide sequence ID" value="NM_198112.2"/>
</dbReference>
<dbReference type="RefSeq" id="XP_036015814.1">
    <property type="nucleotide sequence ID" value="XM_036159921.1"/>
</dbReference>
<dbReference type="FunCoup" id="P61364">
    <property type="interactions" value="503"/>
</dbReference>
<dbReference type="STRING" id="10090.ENSMUSP00000067539"/>
<dbReference type="PhosphoSitePlus" id="P61364"/>
<dbReference type="PaxDb" id="10090-ENSMUSP00000067539"/>
<dbReference type="Antibodypedia" id="56755">
    <property type="antibodies" value="105 antibodies from 13 providers"/>
</dbReference>
<dbReference type="Ensembl" id="ENSMUST00000066852.9">
    <property type="protein sequence ID" value="ENSMUSP00000067539.9"/>
    <property type="gene ID" value="ENSMUSG00000052276.9"/>
</dbReference>
<dbReference type="GeneID" id="239790"/>
<dbReference type="KEGG" id="mmu:239790"/>
<dbReference type="UCSC" id="uc007yvl.1">
    <property type="organism name" value="mouse"/>
</dbReference>
<dbReference type="AGR" id="MGI:2677164"/>
<dbReference type="CTD" id="344901"/>
<dbReference type="MGI" id="MGI:2677164">
    <property type="gene designation" value="Ostn"/>
</dbReference>
<dbReference type="VEuPathDB" id="HostDB:ENSMUSG00000052276"/>
<dbReference type="eggNOG" id="ENOG502S2R3">
    <property type="taxonomic scope" value="Eukaryota"/>
</dbReference>
<dbReference type="GeneTree" id="ENSGT00390000001750"/>
<dbReference type="HOGENOM" id="CLU_155967_0_0_1"/>
<dbReference type="InParanoid" id="P61364"/>
<dbReference type="OMA" id="PMDRIGG"/>
<dbReference type="OrthoDB" id="9900165at2759"/>
<dbReference type="PhylomeDB" id="P61364"/>
<dbReference type="TreeFam" id="TF333399"/>
<dbReference type="BioGRID-ORCS" id="239790">
    <property type="hits" value="1 hit in 75 CRISPR screens"/>
</dbReference>
<dbReference type="ChiTaRS" id="Ostn">
    <property type="organism name" value="mouse"/>
</dbReference>
<dbReference type="PRO" id="PR:P61364"/>
<dbReference type="Proteomes" id="UP000000589">
    <property type="component" value="Chromosome 16"/>
</dbReference>
<dbReference type="RNAct" id="P61364">
    <property type="molecule type" value="protein"/>
</dbReference>
<dbReference type="Bgee" id="ENSMUSG00000052276">
    <property type="expression patterns" value="Expressed in hindlimb stylopod muscle and 21 other cell types or tissues"/>
</dbReference>
<dbReference type="GO" id="GO:0005615">
    <property type="term" value="C:extracellular space"/>
    <property type="evidence" value="ECO:0000314"/>
    <property type="project" value="MGI"/>
</dbReference>
<dbReference type="GO" id="GO:0005179">
    <property type="term" value="F:hormone activity"/>
    <property type="evidence" value="ECO:0007669"/>
    <property type="project" value="UniProtKB-KW"/>
</dbReference>
<dbReference type="GO" id="GO:0005102">
    <property type="term" value="F:signaling receptor binding"/>
    <property type="evidence" value="ECO:0000314"/>
    <property type="project" value="MGI"/>
</dbReference>
<dbReference type="GO" id="GO:0030154">
    <property type="term" value="P:cell differentiation"/>
    <property type="evidence" value="ECO:0007669"/>
    <property type="project" value="UniProtKB-KW"/>
</dbReference>
<dbReference type="GO" id="GO:0007166">
    <property type="term" value="P:cell surface receptor signaling pathway"/>
    <property type="evidence" value="ECO:0000314"/>
    <property type="project" value="MGI"/>
</dbReference>
<dbReference type="GO" id="GO:0003416">
    <property type="term" value="P:endochondral bone growth"/>
    <property type="evidence" value="ECO:0000314"/>
    <property type="project" value="MGI"/>
</dbReference>
<dbReference type="GO" id="GO:0009755">
    <property type="term" value="P:hormone-mediated signaling pathway"/>
    <property type="evidence" value="ECO:0000314"/>
    <property type="project" value="MGI"/>
</dbReference>
<dbReference type="GO" id="GO:0046325">
    <property type="term" value="P:negative regulation of D-glucose import"/>
    <property type="evidence" value="ECO:0000314"/>
    <property type="project" value="MGI"/>
</dbReference>
<dbReference type="GO" id="GO:1903860">
    <property type="term" value="P:negative regulation of dendrite extension"/>
    <property type="evidence" value="ECO:0007669"/>
    <property type="project" value="Ensembl"/>
</dbReference>
<dbReference type="GO" id="GO:0045668">
    <property type="term" value="P:negative regulation of osteoblast differentiation"/>
    <property type="evidence" value="ECO:0000314"/>
    <property type="project" value="MGI"/>
</dbReference>
<dbReference type="GO" id="GO:0001503">
    <property type="term" value="P:ossification"/>
    <property type="evidence" value="ECO:0007669"/>
    <property type="project" value="UniProtKB-KW"/>
</dbReference>
<dbReference type="GO" id="GO:0030500">
    <property type="term" value="P:regulation of bone mineralization"/>
    <property type="evidence" value="ECO:0000305"/>
    <property type="project" value="MGI"/>
</dbReference>
<dbReference type="InterPro" id="IPR021088">
    <property type="entry name" value="Osteocrin"/>
</dbReference>
<dbReference type="PANTHER" id="PTHR35353">
    <property type="entry name" value="OSTEOCRIN"/>
    <property type="match status" value="1"/>
</dbReference>
<dbReference type="PANTHER" id="PTHR35353:SF1">
    <property type="entry name" value="OSTEOCRIN"/>
    <property type="match status" value="1"/>
</dbReference>
<dbReference type="Pfam" id="PF11037">
    <property type="entry name" value="Musclin"/>
    <property type="match status" value="1"/>
</dbReference>
<name>OSTN_MOUSE</name>
<gene>
    <name evidence="12" type="primary">Ostn</name>
</gene>
<feature type="signal peptide" evidence="1">
    <location>
        <begin position="1"/>
        <end position="25"/>
    </location>
</feature>
<feature type="chain" id="PRO_0000439030" description="Osteocrin" evidence="10">
    <location>
        <begin position="26"/>
        <end position="130"/>
    </location>
</feature>
<feature type="peptide" id="PRO_0000021968" description="Processed Osteocrin" evidence="10 11">
    <location>
        <begin position="80"/>
        <end position="129"/>
    </location>
</feature>
<feature type="modified residue" description="Arginine amide" evidence="1">
    <location>
        <position position="129"/>
    </location>
</feature>
<feature type="mutagenesis site" description="Abolishes processing of the protein." evidence="2 3">
    <original>KKKR</original>
    <variation>A</variation>
    <location>
        <begin position="76"/>
        <end position="79"/>
    </location>
</feature>
<feature type="mutagenesis site" description="Abolishes processing of the protein." evidence="2 3">
    <original>KKKR</original>
    <variation>AS</variation>
    <location>
        <begin position="76"/>
        <end position="79"/>
    </location>
</feature>
<accession>P61364</accession>
<accession>Q149W1</accession>
<evidence type="ECO:0000255" key="1"/>
<evidence type="ECO:0000269" key="2">
    <source>
    </source>
</evidence>
<evidence type="ECO:0000269" key="3">
    <source>
    </source>
</evidence>
<evidence type="ECO:0000269" key="4">
    <source>
    </source>
</evidence>
<evidence type="ECO:0000269" key="5">
    <source>
    </source>
</evidence>
<evidence type="ECO:0000269" key="6">
    <source>
    </source>
</evidence>
<evidence type="ECO:0000303" key="7">
    <source>
    </source>
</evidence>
<evidence type="ECO:0000303" key="8">
    <source>
    </source>
</evidence>
<evidence type="ECO:0000305" key="9"/>
<evidence type="ECO:0000305" key="10">
    <source>
    </source>
</evidence>
<evidence type="ECO:0000305" key="11">
    <source>
    </source>
</evidence>
<evidence type="ECO:0000312" key="12">
    <source>
        <dbReference type="MGI" id="MGI:2677164"/>
    </source>
</evidence>
<protein>
    <recommendedName>
        <fullName evidence="7">Osteocrin</fullName>
    </recommendedName>
    <alternativeName>
        <fullName evidence="8">Musclin</fullName>
    </alternativeName>
    <component>
        <recommendedName>
            <fullName evidence="10">Processed Osteocrin</fullName>
        </recommendedName>
    </component>
</protein>
<organism>
    <name type="scientific">Mus musculus</name>
    <name type="common">Mouse</name>
    <dbReference type="NCBI Taxonomy" id="10090"/>
    <lineage>
        <taxon>Eukaryota</taxon>
        <taxon>Metazoa</taxon>
        <taxon>Chordata</taxon>
        <taxon>Craniata</taxon>
        <taxon>Vertebrata</taxon>
        <taxon>Euteleostomi</taxon>
        <taxon>Mammalia</taxon>
        <taxon>Eutheria</taxon>
        <taxon>Euarchontoglires</taxon>
        <taxon>Glires</taxon>
        <taxon>Rodentia</taxon>
        <taxon>Myomorpha</taxon>
        <taxon>Muroidea</taxon>
        <taxon>Muridae</taxon>
        <taxon>Murinae</taxon>
        <taxon>Mus</taxon>
        <taxon>Mus</taxon>
    </lineage>
</organism>
<comment type="function">
    <text evidence="2 3 4 5">Hormone that acts as a ligand for natriuretic peptide receptor NPR3/NPR-C and promotes bone growth and physical endurance in muscle. Acts as a regulator of osteoblast differentiation and bone growth by binding to natriuretic peptide receptor NPR3/NPR-C, thereby preventing binding between NPR3/NPR-C and natriuretic peptides, leading to increase cGMP production (PubMed:14523025, PubMed:17951249). Required to enhance physical endurance: induced following physical exercise in muscle and promotes cGMP production, probably by interacting with NPR3/NPR-C (PubMed:26668395). May act as an autocrine and paracrine factor linked to glucose metabolism in skeletal muscle (PubMed:15044443).</text>
</comment>
<comment type="subunit">
    <text evidence="4">Interacts with NPR3.</text>
</comment>
<comment type="subcellular location">
    <subcellularLocation>
        <location evidence="2 3 5">Secreted</location>
    </subcellularLocation>
</comment>
<comment type="tissue specificity">
    <text evidence="2 3 5 6">Expressed in skeletal muscle and to a much lesser extent in bone, brown adipose tissue, spleen and testis (PubMed:14523025, PubMed:15044443, PubMed:26668395). Not expressed in neurons (PubMed:27830782).</text>
</comment>
<comment type="developmental stage">
    <text evidence="2 3">Expressed during matrix production and maturation. Also expressed during myocyte differentiation.</text>
</comment>
<comment type="induction">
    <text evidence="3 5">Is regulated by nutritional changes (PubMed:15044443). Is up-regulated dose-dependently by insulin (PubMed:15044443). Is down-regulated dose-dependently by forskolin (PubMed:15044443). Induced in muscle following physical exercise (PubMed:26668395).</text>
</comment>
<comment type="disruption phenotype">
    <text evidence="5">Mice grow normally and do not display any visible phenotype but show reduced physical endurance (PubMed:26668395). Mice do not show skeletal deformities, differences in bone density, growth abnormalities, blood pressure nor body composition changes (PubMed:26668395).</text>
</comment>
<comment type="similarity">
    <text evidence="9">Belongs to the Osteocrin family.</text>
</comment>
<comment type="caution">
    <text evidence="6">This protein-coding gene has been repurposed in primates, with the presence of a new enhancer sequence that drives expression in brain in response to sensory experience (PubMed:27830782).</text>
</comment>
<comment type="online information" name="Protein Spotlight">
    <link uri="https://www.proteinspotlight.org/back_issues/189/"/>
    <text>Something else - Issue 189 of March 2017</text>
</comment>
<reference key="1">
    <citation type="journal article" date="2003" name="J. Biol. Chem.">
        <title>Osteocrin, a novel bone-specific secreted protein that modulates the osteoblast phenotype.</title>
        <authorList>
            <person name="Thomas G."/>
            <person name="Moffatt P."/>
            <person name="Salois P."/>
            <person name="Gaumond M.-H."/>
            <person name="Gingras R."/>
            <person name="Godin E."/>
            <person name="Miao D."/>
            <person name="Goltzman D."/>
            <person name="Lanctot C."/>
        </authorList>
    </citation>
    <scope>NUCLEOTIDE SEQUENCE [MRNA]</scope>
    <scope>FUNCTION</scope>
    <scope>SUBCELLULAR LOCATION</scope>
    <scope>TISSUE SPECIFICITY</scope>
    <scope>DEVELOPMENTAL STAGE</scope>
    <scope>MUTAGENESIS OF 76-LYS--ARG-79</scope>
    <source>
        <strain>CD-1</strain>
        <tissue>Calvaria</tissue>
    </source>
</reference>
<reference key="2">
    <citation type="journal article" date="2004" name="J. Biol. Chem.">
        <title>Musclin, a novel skeletal muscle-derived secretory factor.</title>
        <authorList>
            <person name="Nishizawa H."/>
            <person name="Matsuda M."/>
            <person name="Yamada Y."/>
            <person name="Kawai K."/>
            <person name="Suzuki E."/>
            <person name="Makishima M."/>
            <person name="Kitamura T."/>
            <person name="Shimomura I."/>
        </authorList>
    </citation>
    <scope>NUCLEOTIDE SEQUENCE [MRNA]</scope>
    <scope>FUNCTION</scope>
    <scope>SUBCELLULAR LOCATION</scope>
    <scope>TISSUE SPECIFICITY</scope>
    <scope>DEVELOPMENTAL STAGE</scope>
    <scope>INDUCTION</scope>
    <scope>MUTAGENESIS OF 76-LYS--ARG-79</scope>
    <source>
        <strain>C57BL/6J</strain>
        <tissue>Skeletal muscle</tissue>
    </source>
</reference>
<reference key="3">
    <citation type="journal article" date="2004" name="Genome Res.">
        <title>The status, quality, and expansion of the NIH full-length cDNA project: the Mammalian Gene Collection (MGC).</title>
        <authorList>
            <consortium name="The MGC Project Team"/>
        </authorList>
    </citation>
    <scope>NUCLEOTIDE SEQUENCE [LARGE SCALE MRNA]</scope>
    <source>
        <tissue>Thymus</tissue>
    </source>
</reference>
<reference key="4">
    <citation type="journal article" date="2007" name="J. Biol. Chem.">
        <title>Osteocrin is a specific ligand of the natriuretic Peptide clearance receptor that modulates bone growth.</title>
        <authorList>
            <person name="Moffatt P."/>
            <person name="Thomas G."/>
            <person name="Sellin K."/>
            <person name="Bessette M.C."/>
            <person name="Lafreniere F."/>
            <person name="Akhouayri O."/>
            <person name="St-Arnaud R."/>
            <person name="Lanctot C."/>
        </authorList>
    </citation>
    <scope>FUNCTION</scope>
    <scope>INTERACTION WITH NPR3</scope>
</reference>
<reference key="5">
    <citation type="journal article" date="2015" name="Proc. Natl. Acad. Sci. U.S.A.">
        <title>Musclin is an activity-stimulated myokine that enhances physical endurance.</title>
        <authorList>
            <person name="Subbotina E."/>
            <person name="Sierra A."/>
            <person name="Zhu Z."/>
            <person name="Gao Z."/>
            <person name="Koganti S.R."/>
            <person name="Reyes S."/>
            <person name="Stepniak E."/>
            <person name="Walsh S.A."/>
            <person name="Acevedo M.R."/>
            <person name="Perez-Terzic C.M."/>
            <person name="Hodgson-Zingman D.M."/>
            <person name="Zingman L.V."/>
        </authorList>
    </citation>
    <scope>FUNCTION</scope>
    <scope>SUBCELLULAR LOCATION</scope>
    <scope>TISSUE SPECIFICITY</scope>
    <scope>INDUCTION</scope>
    <scope>DISRUPTION PHENOTYPE</scope>
</reference>
<reference key="6">
    <citation type="journal article" date="2016" name="Nature">
        <title>Evolution of Osteocrin as an activity-regulated factor in the primate brain.</title>
        <authorList>
            <person name="Ataman B."/>
            <person name="Boulting G.L."/>
            <person name="Harmin D.A."/>
            <person name="Yang M.G."/>
            <person name="Baker-Salisbury M."/>
            <person name="Yap E.L."/>
            <person name="Malik A.N."/>
            <person name="Mei K."/>
            <person name="Rubin A.A."/>
            <person name="Spiegel I."/>
            <person name="Durresi E."/>
            <person name="Sharma N."/>
            <person name="Hu L.S."/>
            <person name="Pletikos M."/>
            <person name="Griffith E.C."/>
            <person name="Partlow J.N."/>
            <person name="Stevens C.R."/>
            <person name="Adli M."/>
            <person name="Chahrour M."/>
            <person name="Sestan N."/>
            <person name="Walsh C.A."/>
            <person name="Berezovskii V.K."/>
            <person name="Livingstone M.S."/>
            <person name="Greenberg M.E."/>
        </authorList>
    </citation>
    <scope>TISSUE SPECIFICITY</scope>
</reference>
<keyword id="KW-0027">Amidation</keyword>
<keyword id="KW-0165">Cleavage on pair of basic residues</keyword>
<keyword id="KW-0217">Developmental protein</keyword>
<keyword id="KW-0221">Differentiation</keyword>
<keyword id="KW-0372">Hormone</keyword>
<keyword id="KW-0892">Osteogenesis</keyword>
<keyword id="KW-1185">Reference proteome</keyword>
<keyword id="KW-0964">Secreted</keyword>
<keyword id="KW-0732">Signal</keyword>